<name>APOC1_LEPWE</name>
<gene>
    <name type="primary">APOC1</name>
</gene>
<feature type="signal peptide" evidence="1">
    <location>
        <begin position="1"/>
        <end position="26"/>
    </location>
</feature>
<feature type="chain" id="PRO_0000424550" description="Apolipoprotein C-I">
    <location>
        <begin position="27"/>
        <end position="88"/>
    </location>
</feature>
<feature type="chain" id="PRO_0000424551" description="Truncated apolipoprotein C-I" evidence="4">
    <location>
        <begin position="29"/>
        <end position="88"/>
    </location>
</feature>
<dbReference type="EMBL" id="APMU01085778">
    <property type="status" value="NOT_ANNOTATED_CDS"/>
    <property type="molecule type" value="Genomic_DNA"/>
</dbReference>
<dbReference type="RefSeq" id="XP_006738592.1">
    <property type="nucleotide sequence ID" value="XM_006738529.2"/>
</dbReference>
<dbReference type="SMR" id="P0DM83"/>
<dbReference type="STRING" id="9713.P0DM83"/>
<dbReference type="GeneID" id="102733093"/>
<dbReference type="KEGG" id="lww:102733093"/>
<dbReference type="CTD" id="341"/>
<dbReference type="OrthoDB" id="8941712at2759"/>
<dbReference type="Proteomes" id="UP000245341">
    <property type="component" value="Unplaced"/>
</dbReference>
<dbReference type="GO" id="GO:0034364">
    <property type="term" value="C:high-density lipoprotein particle"/>
    <property type="evidence" value="ECO:0007669"/>
    <property type="project" value="TreeGrafter"/>
</dbReference>
<dbReference type="GO" id="GO:0034361">
    <property type="term" value="C:very-low-density lipoprotein particle"/>
    <property type="evidence" value="ECO:0007669"/>
    <property type="project" value="UniProtKB-KW"/>
</dbReference>
<dbReference type="GO" id="GO:0005504">
    <property type="term" value="F:fatty acid binding"/>
    <property type="evidence" value="ECO:0007669"/>
    <property type="project" value="TreeGrafter"/>
</dbReference>
<dbReference type="GO" id="GO:0004859">
    <property type="term" value="F:phospholipase inhibitor activity"/>
    <property type="evidence" value="ECO:0007669"/>
    <property type="project" value="TreeGrafter"/>
</dbReference>
<dbReference type="GO" id="GO:0006869">
    <property type="term" value="P:lipid transport"/>
    <property type="evidence" value="ECO:0007669"/>
    <property type="project" value="UniProtKB-KW"/>
</dbReference>
<dbReference type="GO" id="GO:0042157">
    <property type="term" value="P:lipoprotein metabolic process"/>
    <property type="evidence" value="ECO:0007669"/>
    <property type="project" value="InterPro"/>
</dbReference>
<dbReference type="GO" id="GO:0032375">
    <property type="term" value="P:negative regulation of cholesterol transport"/>
    <property type="evidence" value="ECO:0007669"/>
    <property type="project" value="TreeGrafter"/>
</dbReference>
<dbReference type="GO" id="GO:0050995">
    <property type="term" value="P:negative regulation of lipid catabolic process"/>
    <property type="evidence" value="ECO:0007669"/>
    <property type="project" value="TreeGrafter"/>
</dbReference>
<dbReference type="GO" id="GO:0010916">
    <property type="term" value="P:negative regulation of very-low-density lipoprotein particle clearance"/>
    <property type="evidence" value="ECO:0007669"/>
    <property type="project" value="TreeGrafter"/>
</dbReference>
<dbReference type="GO" id="GO:0006641">
    <property type="term" value="P:triglyceride metabolic process"/>
    <property type="evidence" value="ECO:0007669"/>
    <property type="project" value="TreeGrafter"/>
</dbReference>
<dbReference type="GO" id="GO:0034447">
    <property type="term" value="P:very-low-density lipoprotein particle clearance"/>
    <property type="evidence" value="ECO:0007669"/>
    <property type="project" value="TreeGrafter"/>
</dbReference>
<dbReference type="Gene3D" id="4.10.260.30">
    <property type="entry name" value="Apolipoprotein C-I"/>
    <property type="match status" value="1"/>
</dbReference>
<dbReference type="InterPro" id="IPR043081">
    <property type="entry name" value="ApoC-1_sf"/>
</dbReference>
<dbReference type="InterPro" id="IPR006781">
    <property type="entry name" value="ApoC-I"/>
</dbReference>
<dbReference type="PANTHER" id="PTHR16565">
    <property type="entry name" value="APOLIPOPROTEIN C-I"/>
    <property type="match status" value="1"/>
</dbReference>
<dbReference type="PANTHER" id="PTHR16565:SF2">
    <property type="entry name" value="APOLIPOPROTEIN C-I"/>
    <property type="match status" value="1"/>
</dbReference>
<dbReference type="Pfam" id="PF04691">
    <property type="entry name" value="ApoC-I"/>
    <property type="match status" value="1"/>
</dbReference>
<organism>
    <name type="scientific">Leptonychotes weddellii</name>
    <name type="common">Weddell seal</name>
    <name type="synonym">Otaria weddellii</name>
    <dbReference type="NCBI Taxonomy" id="9713"/>
    <lineage>
        <taxon>Eukaryota</taxon>
        <taxon>Metazoa</taxon>
        <taxon>Chordata</taxon>
        <taxon>Craniata</taxon>
        <taxon>Vertebrata</taxon>
        <taxon>Euteleostomi</taxon>
        <taxon>Mammalia</taxon>
        <taxon>Eutheria</taxon>
        <taxon>Laurasiatheria</taxon>
        <taxon>Carnivora</taxon>
        <taxon>Caniformia</taxon>
        <taxon>Pinnipedia</taxon>
        <taxon>Phocidae</taxon>
        <taxon>Monachinae</taxon>
        <taxon>Lobodontini</taxon>
        <taxon>Leptonychotes</taxon>
    </lineage>
</organism>
<sequence>MRLFLSLPVLVVVLAMVLEGPAPTQAAPEISSTLGRIPDKLKEFGNTLEDKARAAIESIKQSDIPAKTRNWFSETFHKVKEQLKTAFS</sequence>
<keyword id="KW-0445">Lipid transport</keyword>
<keyword id="KW-1185">Reference proteome</keyword>
<keyword id="KW-0964">Secreted</keyword>
<keyword id="KW-0732">Signal</keyword>
<keyword id="KW-0813">Transport</keyword>
<keyword id="KW-0850">VLDL</keyword>
<evidence type="ECO:0000250" key="1"/>
<evidence type="ECO:0000250" key="2">
    <source>
        <dbReference type="UniProtKB" id="P02654"/>
    </source>
</evidence>
<evidence type="ECO:0000250" key="3">
    <source>
        <dbReference type="UniProtKB" id="P33047"/>
    </source>
</evidence>
<evidence type="ECO:0000250" key="4">
    <source>
        <dbReference type="UniProtKB" id="P86336"/>
    </source>
</evidence>
<evidence type="ECO:0000305" key="5"/>
<reference key="1">
    <citation type="submission" date="2013-04" db="EMBL/GenBank/DDBJ databases">
        <authorList>
            <person name="Di Palma F."/>
            <person name="Alfoldi J."/>
            <person name="Johnson J."/>
            <person name="Berlin A."/>
            <person name="Gnerre S."/>
            <person name="Jaffe D."/>
            <person name="MacCallum I."/>
            <person name="Young S."/>
            <person name="Walker B.J."/>
            <person name="Lindblad-Toh K."/>
        </authorList>
    </citation>
    <scope>NUCLEOTIDE SEQUENCE [LARGE SCALE GENOMIC DNA]</scope>
</reference>
<reference key="2">
    <citation type="unpublished observations" date="2013-10">
        <authorList>
            <person name="Puppione D.L."/>
        </authorList>
    </citation>
    <scope>IDENTIFICATION</scope>
</reference>
<accession>P0DM83</accession>
<protein>
    <recommendedName>
        <fullName>Apolipoprotein C-I</fullName>
        <shortName>Apo-CI</shortName>
        <shortName>ApoC-I</shortName>
    </recommendedName>
    <alternativeName>
        <fullName>Apolipoprotein C1</fullName>
    </alternativeName>
    <component>
        <recommendedName>
            <fullName>Truncated apolipoprotein C-I</fullName>
        </recommendedName>
    </component>
</protein>
<comment type="function">
    <text evidence="2 3">Inhibitor of lipoprotein binding to the low density lipoprotein (LDL) receptor, LDL receptor-related protein, and very low density lipoprotein (VLDL) receptor. Associates with high density lipoproteins (HDL) and the triacylglycerol-rich lipoproteins in the plasma and makes up about 10% of the protein of the VLDL and 2% of that of HDL. Appears to interfere directly with fatty acid uptake and is also the major plasma inhibitor of cholesteryl ester transfer protein (CETP). Binds free fatty acids and reduces their intracellular esterification. Modulates the interaction of APOE with beta-migrating VLDL and inhibits binding of beta-VLDL to the LDL receptor-related protein.</text>
</comment>
<comment type="subcellular location">
    <subcellularLocation>
        <location evidence="2">Secreted</location>
    </subcellularLocation>
</comment>
<comment type="similarity">
    <text evidence="5">Belongs to the apolipoprotein C1 family.</text>
</comment>
<proteinExistence type="inferred from homology"/>